<keyword id="KW-0012">Acyltransferase</keyword>
<keyword id="KW-0963">Cytoplasm</keyword>
<keyword id="KW-0275">Fatty acid biosynthesis</keyword>
<keyword id="KW-0276">Fatty acid metabolism</keyword>
<keyword id="KW-0444">Lipid biosynthesis</keyword>
<keyword id="KW-0443">Lipid metabolism</keyword>
<keyword id="KW-0511">Multifunctional enzyme</keyword>
<keyword id="KW-1185">Reference proteome</keyword>
<keyword id="KW-0808">Transferase</keyword>
<name>FABH_ACICJ</name>
<accession>A5FV65</accession>
<organism>
    <name type="scientific">Acidiphilium cryptum (strain JF-5)</name>
    <dbReference type="NCBI Taxonomy" id="349163"/>
    <lineage>
        <taxon>Bacteria</taxon>
        <taxon>Pseudomonadati</taxon>
        <taxon>Pseudomonadota</taxon>
        <taxon>Alphaproteobacteria</taxon>
        <taxon>Acetobacterales</taxon>
        <taxon>Acidocellaceae</taxon>
        <taxon>Acidiphilium</taxon>
    </lineage>
</organism>
<feature type="chain" id="PRO_1000070211" description="Beta-ketoacyl-[acyl-carrier-protein] synthase III">
    <location>
        <begin position="1"/>
        <end position="320"/>
    </location>
</feature>
<feature type="region of interest" description="ACP-binding" evidence="1">
    <location>
        <begin position="248"/>
        <end position="252"/>
    </location>
</feature>
<feature type="active site" evidence="1">
    <location>
        <position position="113"/>
    </location>
</feature>
<feature type="active site" evidence="1">
    <location>
        <position position="247"/>
    </location>
</feature>
<feature type="active site" evidence="1">
    <location>
        <position position="277"/>
    </location>
</feature>
<protein>
    <recommendedName>
        <fullName evidence="1">Beta-ketoacyl-[acyl-carrier-protein] synthase III</fullName>
        <shortName evidence="1">Beta-ketoacyl-ACP synthase III</shortName>
        <shortName evidence="1">KAS III</shortName>
        <ecNumber evidence="1">2.3.1.180</ecNumber>
    </recommendedName>
    <alternativeName>
        <fullName evidence="1">3-oxoacyl-[acyl-carrier-protein] synthase 3</fullName>
    </alternativeName>
    <alternativeName>
        <fullName evidence="1">3-oxoacyl-[acyl-carrier-protein] synthase III</fullName>
    </alternativeName>
</protein>
<reference key="1">
    <citation type="submission" date="2007-05" db="EMBL/GenBank/DDBJ databases">
        <title>Complete sequence of chromosome of Acidiphilium cryptum JF-5.</title>
        <authorList>
            <consortium name="US DOE Joint Genome Institute"/>
            <person name="Copeland A."/>
            <person name="Lucas S."/>
            <person name="Lapidus A."/>
            <person name="Barry K."/>
            <person name="Detter J.C."/>
            <person name="Glavina del Rio T."/>
            <person name="Hammon N."/>
            <person name="Israni S."/>
            <person name="Dalin E."/>
            <person name="Tice H."/>
            <person name="Pitluck S."/>
            <person name="Sims D."/>
            <person name="Brettin T."/>
            <person name="Bruce D."/>
            <person name="Han C."/>
            <person name="Schmutz J."/>
            <person name="Larimer F."/>
            <person name="Land M."/>
            <person name="Hauser L."/>
            <person name="Kyrpides N."/>
            <person name="Kim E."/>
            <person name="Magnuson T."/>
            <person name="Richardson P."/>
        </authorList>
    </citation>
    <scope>NUCLEOTIDE SEQUENCE [LARGE SCALE GENOMIC DNA]</scope>
    <source>
        <strain>JF-5</strain>
    </source>
</reference>
<gene>
    <name evidence="1" type="primary">fabH</name>
    <name type="ordered locus">Acry_0269</name>
</gene>
<comment type="function">
    <text evidence="1">Catalyzes the condensation reaction of fatty acid synthesis by the addition to an acyl acceptor of two carbons from malonyl-ACP. Catalyzes the first condensation reaction which initiates fatty acid synthesis and may therefore play a role in governing the total rate of fatty acid production. Possesses both acetoacetyl-ACP synthase and acetyl transacylase activities. Its substrate specificity determines the biosynthesis of branched-chain and/or straight-chain of fatty acids.</text>
</comment>
<comment type="catalytic activity">
    <reaction evidence="1">
        <text>malonyl-[ACP] + acetyl-CoA + H(+) = 3-oxobutanoyl-[ACP] + CO2 + CoA</text>
        <dbReference type="Rhea" id="RHEA:12080"/>
        <dbReference type="Rhea" id="RHEA-COMP:9623"/>
        <dbReference type="Rhea" id="RHEA-COMP:9625"/>
        <dbReference type="ChEBI" id="CHEBI:15378"/>
        <dbReference type="ChEBI" id="CHEBI:16526"/>
        <dbReference type="ChEBI" id="CHEBI:57287"/>
        <dbReference type="ChEBI" id="CHEBI:57288"/>
        <dbReference type="ChEBI" id="CHEBI:78449"/>
        <dbReference type="ChEBI" id="CHEBI:78450"/>
        <dbReference type="EC" id="2.3.1.180"/>
    </reaction>
</comment>
<comment type="pathway">
    <text evidence="1">Lipid metabolism; fatty acid biosynthesis.</text>
</comment>
<comment type="subunit">
    <text evidence="1">Homodimer.</text>
</comment>
<comment type="subcellular location">
    <subcellularLocation>
        <location evidence="1">Cytoplasm</location>
    </subcellularLocation>
</comment>
<comment type="domain">
    <text evidence="1">The last Arg residue of the ACP-binding site is essential for the weak association between ACP/AcpP and FabH.</text>
</comment>
<comment type="similarity">
    <text evidence="1">Belongs to the thiolase-like superfamily. FabH family.</text>
</comment>
<evidence type="ECO:0000255" key="1">
    <source>
        <dbReference type="HAMAP-Rule" id="MF_01815"/>
    </source>
</evidence>
<sequence length="320" mass="33874">MQRTVLEGVGSYLPERIVTNHELATRIDTSDAWIRERTGIGQRHIAAAHETATFMGAEAARRALAAAGASADSVDAVIVATSTPDQGFPATAVSIQAAIGMTRGFAFDLSAACSGFVYGVSVADAMIRAGQCRSALVIGTEVYSRILNWEDRGTCVLFGDGAGAVLLRAGTGEDDRGVISTHIHSDGRYGDILFIDGATGQDDRPQHLVMNGREVFRHAVSKLAGAVDEALAANDLTQADIDWLVPHQANRRIIDAMGKRLGLAPEQVVVTVDRHANTSAASIPLALDEAVRDGRIRRGHLVLIEALGGGLTWGSALIRF</sequence>
<proteinExistence type="inferred from homology"/>
<dbReference type="EC" id="2.3.1.180" evidence="1"/>
<dbReference type="EMBL" id="CP000697">
    <property type="protein sequence ID" value="ABQ29497.1"/>
    <property type="molecule type" value="Genomic_DNA"/>
</dbReference>
<dbReference type="RefSeq" id="WP_011941400.1">
    <property type="nucleotide sequence ID" value="NC_009484.1"/>
</dbReference>
<dbReference type="SMR" id="A5FV65"/>
<dbReference type="STRING" id="349163.Acry_0269"/>
<dbReference type="KEGG" id="acr:Acry_0269"/>
<dbReference type="eggNOG" id="COG0332">
    <property type="taxonomic scope" value="Bacteria"/>
</dbReference>
<dbReference type="HOGENOM" id="CLU_039592_3_1_5"/>
<dbReference type="UniPathway" id="UPA00094"/>
<dbReference type="Proteomes" id="UP000000245">
    <property type="component" value="Chromosome"/>
</dbReference>
<dbReference type="GO" id="GO:0005737">
    <property type="term" value="C:cytoplasm"/>
    <property type="evidence" value="ECO:0007669"/>
    <property type="project" value="UniProtKB-SubCell"/>
</dbReference>
<dbReference type="GO" id="GO:0004315">
    <property type="term" value="F:3-oxoacyl-[acyl-carrier-protein] synthase activity"/>
    <property type="evidence" value="ECO:0007669"/>
    <property type="project" value="InterPro"/>
</dbReference>
<dbReference type="GO" id="GO:0033818">
    <property type="term" value="F:beta-ketoacyl-acyl-carrier-protein synthase III activity"/>
    <property type="evidence" value="ECO:0007669"/>
    <property type="project" value="UniProtKB-UniRule"/>
</dbReference>
<dbReference type="GO" id="GO:0006633">
    <property type="term" value="P:fatty acid biosynthetic process"/>
    <property type="evidence" value="ECO:0007669"/>
    <property type="project" value="UniProtKB-UniRule"/>
</dbReference>
<dbReference type="GO" id="GO:0044550">
    <property type="term" value="P:secondary metabolite biosynthetic process"/>
    <property type="evidence" value="ECO:0007669"/>
    <property type="project" value="TreeGrafter"/>
</dbReference>
<dbReference type="CDD" id="cd00830">
    <property type="entry name" value="KAS_III"/>
    <property type="match status" value="1"/>
</dbReference>
<dbReference type="FunFam" id="3.40.47.10:FF:000004">
    <property type="entry name" value="3-oxoacyl-[acyl-carrier-protein] synthase 3"/>
    <property type="match status" value="1"/>
</dbReference>
<dbReference type="Gene3D" id="3.40.47.10">
    <property type="match status" value="1"/>
</dbReference>
<dbReference type="HAMAP" id="MF_01815">
    <property type="entry name" value="FabH"/>
    <property type="match status" value="1"/>
</dbReference>
<dbReference type="InterPro" id="IPR013747">
    <property type="entry name" value="ACP_syn_III_C"/>
</dbReference>
<dbReference type="InterPro" id="IPR013751">
    <property type="entry name" value="ACP_syn_III_N"/>
</dbReference>
<dbReference type="InterPro" id="IPR004655">
    <property type="entry name" value="FabH"/>
</dbReference>
<dbReference type="InterPro" id="IPR016039">
    <property type="entry name" value="Thiolase-like"/>
</dbReference>
<dbReference type="NCBIfam" id="TIGR00747">
    <property type="entry name" value="fabH"/>
    <property type="match status" value="1"/>
</dbReference>
<dbReference type="NCBIfam" id="NF006829">
    <property type="entry name" value="PRK09352.1"/>
    <property type="match status" value="1"/>
</dbReference>
<dbReference type="PANTHER" id="PTHR34069">
    <property type="entry name" value="3-OXOACYL-[ACYL-CARRIER-PROTEIN] SYNTHASE 3"/>
    <property type="match status" value="1"/>
</dbReference>
<dbReference type="PANTHER" id="PTHR34069:SF2">
    <property type="entry name" value="BETA-KETOACYL-[ACYL-CARRIER-PROTEIN] SYNTHASE III"/>
    <property type="match status" value="1"/>
</dbReference>
<dbReference type="Pfam" id="PF08545">
    <property type="entry name" value="ACP_syn_III"/>
    <property type="match status" value="1"/>
</dbReference>
<dbReference type="Pfam" id="PF08541">
    <property type="entry name" value="ACP_syn_III_C"/>
    <property type="match status" value="1"/>
</dbReference>
<dbReference type="SUPFAM" id="SSF53901">
    <property type="entry name" value="Thiolase-like"/>
    <property type="match status" value="1"/>
</dbReference>